<comment type="function">
    <text evidence="1">Catalyzes the transfer of endogenously produced octanoic acid from octanoyl-acyl-carrier-protein onto the lipoyl domains of lipoate-dependent enzymes. Lipoyl-ACP can also act as a substrate although octanoyl-ACP is likely to be the physiological substrate.</text>
</comment>
<comment type="catalytic activity">
    <reaction evidence="1">
        <text>octanoyl-[ACP] + L-lysyl-[protein] = N(6)-octanoyl-L-lysyl-[protein] + holo-[ACP] + H(+)</text>
        <dbReference type="Rhea" id="RHEA:17665"/>
        <dbReference type="Rhea" id="RHEA-COMP:9636"/>
        <dbReference type="Rhea" id="RHEA-COMP:9685"/>
        <dbReference type="Rhea" id="RHEA-COMP:9752"/>
        <dbReference type="Rhea" id="RHEA-COMP:9928"/>
        <dbReference type="ChEBI" id="CHEBI:15378"/>
        <dbReference type="ChEBI" id="CHEBI:29969"/>
        <dbReference type="ChEBI" id="CHEBI:64479"/>
        <dbReference type="ChEBI" id="CHEBI:78463"/>
        <dbReference type="ChEBI" id="CHEBI:78809"/>
        <dbReference type="EC" id="2.3.1.181"/>
    </reaction>
</comment>
<comment type="pathway">
    <text evidence="1">Protein modification; protein lipoylation via endogenous pathway; protein N(6)-(lipoyl)lysine from octanoyl-[acyl-carrier-protein]: step 1/2.</text>
</comment>
<comment type="subcellular location">
    <subcellularLocation>
        <location evidence="1">Cytoplasm</location>
    </subcellularLocation>
</comment>
<comment type="miscellaneous">
    <text evidence="1">In the reaction, the free carboxyl group of octanoic acid is attached via an amide linkage to the epsilon-amino group of a specific lysine residue of lipoyl domains of lipoate-dependent enzymes.</text>
</comment>
<comment type="similarity">
    <text evidence="1">Belongs to the LipB family.</text>
</comment>
<proteinExistence type="inferred from homology"/>
<dbReference type="EC" id="2.3.1.181" evidence="1"/>
<dbReference type="EMBL" id="CU928161">
    <property type="protein sequence ID" value="CAR02011.1"/>
    <property type="molecule type" value="Genomic_DNA"/>
</dbReference>
<dbReference type="RefSeq" id="WP_000284027.1">
    <property type="nucleotide sequence ID" value="NC_011742.1"/>
</dbReference>
<dbReference type="SMR" id="B7MFQ3"/>
<dbReference type="GeneID" id="93776852"/>
<dbReference type="KEGG" id="ecz:ECS88_0671"/>
<dbReference type="HOGENOM" id="CLU_035168_3_1_6"/>
<dbReference type="UniPathway" id="UPA00538">
    <property type="reaction ID" value="UER00592"/>
</dbReference>
<dbReference type="Proteomes" id="UP000000747">
    <property type="component" value="Chromosome"/>
</dbReference>
<dbReference type="GO" id="GO:0005737">
    <property type="term" value="C:cytoplasm"/>
    <property type="evidence" value="ECO:0007669"/>
    <property type="project" value="UniProtKB-SubCell"/>
</dbReference>
<dbReference type="GO" id="GO:0033819">
    <property type="term" value="F:lipoyl(octanoyl) transferase activity"/>
    <property type="evidence" value="ECO:0007669"/>
    <property type="project" value="UniProtKB-EC"/>
</dbReference>
<dbReference type="GO" id="GO:0036211">
    <property type="term" value="P:protein modification process"/>
    <property type="evidence" value="ECO:0007669"/>
    <property type="project" value="InterPro"/>
</dbReference>
<dbReference type="CDD" id="cd16444">
    <property type="entry name" value="LipB"/>
    <property type="match status" value="1"/>
</dbReference>
<dbReference type="FunFam" id="3.30.930.10:FF:000020">
    <property type="entry name" value="Octanoyltransferase"/>
    <property type="match status" value="1"/>
</dbReference>
<dbReference type="Gene3D" id="3.30.930.10">
    <property type="entry name" value="Bira Bifunctional Protein, Domain 2"/>
    <property type="match status" value="1"/>
</dbReference>
<dbReference type="HAMAP" id="MF_00013">
    <property type="entry name" value="LipB"/>
    <property type="match status" value="1"/>
</dbReference>
<dbReference type="InterPro" id="IPR045864">
    <property type="entry name" value="aa-tRNA-synth_II/BPL/LPL"/>
</dbReference>
<dbReference type="InterPro" id="IPR004143">
    <property type="entry name" value="BPL_LPL_catalytic"/>
</dbReference>
<dbReference type="InterPro" id="IPR000544">
    <property type="entry name" value="Octanoyltransferase"/>
</dbReference>
<dbReference type="InterPro" id="IPR020605">
    <property type="entry name" value="Octanoyltransferase_CS"/>
</dbReference>
<dbReference type="NCBIfam" id="TIGR00214">
    <property type="entry name" value="lipB"/>
    <property type="match status" value="1"/>
</dbReference>
<dbReference type="NCBIfam" id="NF010922">
    <property type="entry name" value="PRK14342.1"/>
    <property type="match status" value="1"/>
</dbReference>
<dbReference type="PANTHER" id="PTHR10993:SF7">
    <property type="entry name" value="LIPOYLTRANSFERASE 2, MITOCHONDRIAL-RELATED"/>
    <property type="match status" value="1"/>
</dbReference>
<dbReference type="PANTHER" id="PTHR10993">
    <property type="entry name" value="OCTANOYLTRANSFERASE"/>
    <property type="match status" value="1"/>
</dbReference>
<dbReference type="Pfam" id="PF21948">
    <property type="entry name" value="LplA-B_cat"/>
    <property type="match status" value="1"/>
</dbReference>
<dbReference type="PIRSF" id="PIRSF016262">
    <property type="entry name" value="LPLase"/>
    <property type="match status" value="1"/>
</dbReference>
<dbReference type="SUPFAM" id="SSF55681">
    <property type="entry name" value="Class II aaRS and biotin synthetases"/>
    <property type="match status" value="1"/>
</dbReference>
<dbReference type="PROSITE" id="PS51733">
    <property type="entry name" value="BPL_LPL_CATALYTIC"/>
    <property type="match status" value="1"/>
</dbReference>
<dbReference type="PROSITE" id="PS01313">
    <property type="entry name" value="LIPB"/>
    <property type="match status" value="1"/>
</dbReference>
<keyword id="KW-0012">Acyltransferase</keyword>
<keyword id="KW-0963">Cytoplasm</keyword>
<keyword id="KW-1185">Reference proteome</keyword>
<keyword id="KW-0808">Transferase</keyword>
<gene>
    <name evidence="1" type="primary">lipB</name>
    <name type="ordered locus">ECS88_0671</name>
</gene>
<sequence>MYQDKILVRQLGLQPYEPISQAMHEFTDTRDDSTLDEIWLVEHYPVFTQGQAGKAEHILMPGDIPVIQSDRGGQVTYHGPGQQVMYVLLNLKRRKLGVRELVTLLEQTVVNTLAELGIEAHPRADAPGVYVGEKKICSLGLRIRRGCSFHGLALNVNMDLSPFLRINPCGYAGMEMAKISQWKPEATTNNIAPRLLENILALLNNPDFEYITA</sequence>
<feature type="chain" id="PRO_1000116280" description="Octanoyltransferase">
    <location>
        <begin position="1"/>
        <end position="213"/>
    </location>
</feature>
<feature type="domain" description="BPL/LPL catalytic" evidence="2">
    <location>
        <begin position="32"/>
        <end position="207"/>
    </location>
</feature>
<feature type="active site" description="Acyl-thioester intermediate" evidence="1">
    <location>
        <position position="169"/>
    </location>
</feature>
<feature type="binding site" evidence="1">
    <location>
        <begin position="71"/>
        <end position="78"/>
    </location>
    <ligand>
        <name>substrate</name>
    </ligand>
</feature>
<feature type="binding site" evidence="1">
    <location>
        <begin position="138"/>
        <end position="140"/>
    </location>
    <ligand>
        <name>substrate</name>
    </ligand>
</feature>
<feature type="binding site" evidence="1">
    <location>
        <begin position="151"/>
        <end position="153"/>
    </location>
    <ligand>
        <name>substrate</name>
    </ligand>
</feature>
<feature type="site" description="Lowers pKa of active site Cys" evidence="1">
    <location>
        <position position="135"/>
    </location>
</feature>
<protein>
    <recommendedName>
        <fullName evidence="1">Octanoyltransferase</fullName>
        <ecNumber evidence="1">2.3.1.181</ecNumber>
    </recommendedName>
    <alternativeName>
        <fullName evidence="1">Lipoate-protein ligase B</fullName>
    </alternativeName>
    <alternativeName>
        <fullName evidence="1">Lipoyl/octanoyl transferase</fullName>
    </alternativeName>
    <alternativeName>
        <fullName evidence="1">Octanoyl-[acyl-carrier-protein]-protein N-octanoyltransferase</fullName>
    </alternativeName>
</protein>
<evidence type="ECO:0000255" key="1">
    <source>
        <dbReference type="HAMAP-Rule" id="MF_00013"/>
    </source>
</evidence>
<evidence type="ECO:0000255" key="2">
    <source>
        <dbReference type="PROSITE-ProRule" id="PRU01067"/>
    </source>
</evidence>
<name>LIPB_ECO45</name>
<organism>
    <name type="scientific">Escherichia coli O45:K1 (strain S88 / ExPEC)</name>
    <dbReference type="NCBI Taxonomy" id="585035"/>
    <lineage>
        <taxon>Bacteria</taxon>
        <taxon>Pseudomonadati</taxon>
        <taxon>Pseudomonadota</taxon>
        <taxon>Gammaproteobacteria</taxon>
        <taxon>Enterobacterales</taxon>
        <taxon>Enterobacteriaceae</taxon>
        <taxon>Escherichia</taxon>
    </lineage>
</organism>
<reference key="1">
    <citation type="journal article" date="2009" name="PLoS Genet.">
        <title>Organised genome dynamics in the Escherichia coli species results in highly diverse adaptive paths.</title>
        <authorList>
            <person name="Touchon M."/>
            <person name="Hoede C."/>
            <person name="Tenaillon O."/>
            <person name="Barbe V."/>
            <person name="Baeriswyl S."/>
            <person name="Bidet P."/>
            <person name="Bingen E."/>
            <person name="Bonacorsi S."/>
            <person name="Bouchier C."/>
            <person name="Bouvet O."/>
            <person name="Calteau A."/>
            <person name="Chiapello H."/>
            <person name="Clermont O."/>
            <person name="Cruveiller S."/>
            <person name="Danchin A."/>
            <person name="Diard M."/>
            <person name="Dossat C."/>
            <person name="Karoui M.E."/>
            <person name="Frapy E."/>
            <person name="Garry L."/>
            <person name="Ghigo J.M."/>
            <person name="Gilles A.M."/>
            <person name="Johnson J."/>
            <person name="Le Bouguenec C."/>
            <person name="Lescat M."/>
            <person name="Mangenot S."/>
            <person name="Martinez-Jehanne V."/>
            <person name="Matic I."/>
            <person name="Nassif X."/>
            <person name="Oztas S."/>
            <person name="Petit M.A."/>
            <person name="Pichon C."/>
            <person name="Rouy Z."/>
            <person name="Ruf C.S."/>
            <person name="Schneider D."/>
            <person name="Tourret J."/>
            <person name="Vacherie B."/>
            <person name="Vallenet D."/>
            <person name="Medigue C."/>
            <person name="Rocha E.P.C."/>
            <person name="Denamur E."/>
        </authorList>
    </citation>
    <scope>NUCLEOTIDE SEQUENCE [LARGE SCALE GENOMIC DNA]</scope>
    <source>
        <strain>S88 / ExPEC</strain>
    </source>
</reference>
<accession>B7MFQ3</accession>